<organism>
    <name type="scientific">Proteus mirabilis (strain HI4320)</name>
    <dbReference type="NCBI Taxonomy" id="529507"/>
    <lineage>
        <taxon>Bacteria</taxon>
        <taxon>Pseudomonadati</taxon>
        <taxon>Pseudomonadota</taxon>
        <taxon>Gammaproteobacteria</taxon>
        <taxon>Enterobacterales</taxon>
        <taxon>Morganellaceae</taxon>
        <taxon>Proteus</taxon>
    </lineage>
</organism>
<evidence type="ECO:0000255" key="1"/>
<evidence type="ECO:0000255" key="2">
    <source>
        <dbReference type="HAMAP-Rule" id="MF_01260"/>
    </source>
</evidence>
<sequence length="261" mass="28929">MNKLYWQTLGEGKTHLVLLHGWGLNAQVWQSIITRLSSHFTLHLVDLPGYGRSQGFPVLTLKEMADIVFSQAPEKKAIWLGWSLGGLVASRIALDNPNNVRALITVASSPCFAAHEAWPGIKPDVLKGFEQQLSDNFHRTVERFLALQTLGTQSAREDTKALKAVVLAQPLPSVETLNGGLEILRTEDLREQLTTLCCPFIRLYGYLDGLVPRKVAALLDARYPDSPSVIFRHAAHAPFISHPDEFSETLLKQCEALSILA</sequence>
<reference key="1">
    <citation type="journal article" date="2008" name="J. Bacteriol.">
        <title>Complete genome sequence of uropathogenic Proteus mirabilis, a master of both adherence and motility.</title>
        <authorList>
            <person name="Pearson M.M."/>
            <person name="Sebaihia M."/>
            <person name="Churcher C."/>
            <person name="Quail M.A."/>
            <person name="Seshasayee A.S."/>
            <person name="Luscombe N.M."/>
            <person name="Abdellah Z."/>
            <person name="Arrosmith C."/>
            <person name="Atkin B."/>
            <person name="Chillingworth T."/>
            <person name="Hauser H."/>
            <person name="Jagels K."/>
            <person name="Moule S."/>
            <person name="Mungall K."/>
            <person name="Norbertczak H."/>
            <person name="Rabbinowitsch E."/>
            <person name="Walker D."/>
            <person name="Whithead S."/>
            <person name="Thomson N.R."/>
            <person name="Rather P.N."/>
            <person name="Parkhill J."/>
            <person name="Mobley H.L.T."/>
        </authorList>
    </citation>
    <scope>NUCLEOTIDE SEQUENCE [LARGE SCALE GENOMIC DNA]</scope>
    <source>
        <strain>HI4320</strain>
    </source>
</reference>
<protein>
    <recommendedName>
        <fullName evidence="2">Pimeloyl-[acyl-carrier protein] methyl ester esterase</fullName>
        <ecNumber evidence="2">3.1.1.85</ecNumber>
    </recommendedName>
    <alternativeName>
        <fullName evidence="2">Biotin synthesis protein BioH</fullName>
    </alternativeName>
    <alternativeName>
        <fullName evidence="2">Carboxylesterase BioH</fullName>
    </alternativeName>
</protein>
<proteinExistence type="inferred from homology"/>
<dbReference type="EC" id="3.1.1.85" evidence="2"/>
<dbReference type="EMBL" id="AM942759">
    <property type="protein sequence ID" value="CAR45760.1"/>
    <property type="molecule type" value="Genomic_DNA"/>
</dbReference>
<dbReference type="RefSeq" id="WP_012368553.1">
    <property type="nucleotide sequence ID" value="NC_010554.1"/>
</dbReference>
<dbReference type="SMR" id="B4EZM6"/>
<dbReference type="ESTHER" id="promh-bioh">
    <property type="family name" value="BioH"/>
</dbReference>
<dbReference type="EnsemblBacteria" id="CAR45760">
    <property type="protein sequence ID" value="CAR45760"/>
    <property type="gene ID" value="PMI2924"/>
</dbReference>
<dbReference type="GeneID" id="6803064"/>
<dbReference type="KEGG" id="pmr:PMI2924"/>
<dbReference type="eggNOG" id="COG2267">
    <property type="taxonomic scope" value="Bacteria"/>
</dbReference>
<dbReference type="HOGENOM" id="CLU_020336_12_2_6"/>
<dbReference type="UniPathway" id="UPA00078"/>
<dbReference type="Proteomes" id="UP000008319">
    <property type="component" value="Chromosome"/>
</dbReference>
<dbReference type="GO" id="GO:0005737">
    <property type="term" value="C:cytoplasm"/>
    <property type="evidence" value="ECO:0007669"/>
    <property type="project" value="UniProtKB-SubCell"/>
</dbReference>
<dbReference type="GO" id="GO:0090499">
    <property type="term" value="F:pimelyl-[acyl-carrier protein] methyl ester esterase activity"/>
    <property type="evidence" value="ECO:0007669"/>
    <property type="project" value="UniProtKB-EC"/>
</dbReference>
<dbReference type="GO" id="GO:0009102">
    <property type="term" value="P:biotin biosynthetic process"/>
    <property type="evidence" value="ECO:0007669"/>
    <property type="project" value="UniProtKB-UniRule"/>
</dbReference>
<dbReference type="Gene3D" id="3.40.50.1820">
    <property type="entry name" value="alpha/beta hydrolase"/>
    <property type="match status" value="1"/>
</dbReference>
<dbReference type="HAMAP" id="MF_01260">
    <property type="entry name" value="Carboxylester"/>
    <property type="match status" value="1"/>
</dbReference>
<dbReference type="InterPro" id="IPR000073">
    <property type="entry name" value="AB_hydrolase_1"/>
</dbReference>
<dbReference type="InterPro" id="IPR029058">
    <property type="entry name" value="AB_hydrolase_fold"/>
</dbReference>
<dbReference type="InterPro" id="IPR010076">
    <property type="entry name" value="BioH"/>
</dbReference>
<dbReference type="InterPro" id="IPR050228">
    <property type="entry name" value="Carboxylesterase_BioH"/>
</dbReference>
<dbReference type="NCBIfam" id="TIGR01738">
    <property type="entry name" value="bioH"/>
    <property type="match status" value="1"/>
</dbReference>
<dbReference type="PANTHER" id="PTHR43194">
    <property type="entry name" value="HYDROLASE ALPHA/BETA FOLD FAMILY"/>
    <property type="match status" value="1"/>
</dbReference>
<dbReference type="PANTHER" id="PTHR43194:SF5">
    <property type="entry name" value="PIMELOYL-[ACYL-CARRIER PROTEIN] METHYL ESTER ESTERASE"/>
    <property type="match status" value="1"/>
</dbReference>
<dbReference type="Pfam" id="PF00561">
    <property type="entry name" value="Abhydrolase_1"/>
    <property type="match status" value="1"/>
</dbReference>
<dbReference type="SUPFAM" id="SSF53474">
    <property type="entry name" value="alpha/beta-Hydrolases"/>
    <property type="match status" value="1"/>
</dbReference>
<accession>B4EZM6</accession>
<keyword id="KW-0093">Biotin biosynthesis</keyword>
<keyword id="KW-0963">Cytoplasm</keyword>
<keyword id="KW-0378">Hydrolase</keyword>
<keyword id="KW-1185">Reference proteome</keyword>
<keyword id="KW-0719">Serine esterase</keyword>
<feature type="chain" id="PRO_1000139996" description="Pimeloyl-[acyl-carrier protein] methyl ester esterase">
    <location>
        <begin position="1"/>
        <end position="261"/>
    </location>
</feature>
<feature type="domain" description="AB hydrolase-1" evidence="1">
    <location>
        <begin position="15"/>
        <end position="243"/>
    </location>
</feature>
<feature type="active site" description="Nucleophile" evidence="2">
    <location>
        <position position="83"/>
    </location>
</feature>
<feature type="active site" evidence="2">
    <location>
        <position position="208"/>
    </location>
</feature>
<feature type="active site" evidence="2">
    <location>
        <position position="236"/>
    </location>
</feature>
<feature type="binding site" evidence="2">
    <location>
        <position position="22"/>
    </location>
    <ligand>
        <name>substrate</name>
    </ligand>
</feature>
<feature type="binding site" evidence="2">
    <location>
        <begin position="83"/>
        <end position="84"/>
    </location>
    <ligand>
        <name>substrate</name>
    </ligand>
</feature>
<feature type="binding site" evidence="2">
    <location>
        <begin position="144"/>
        <end position="148"/>
    </location>
    <ligand>
        <name>substrate</name>
    </ligand>
</feature>
<feature type="binding site" evidence="2">
    <location>
        <position position="236"/>
    </location>
    <ligand>
        <name>substrate</name>
    </ligand>
</feature>
<name>BIOH_PROMH</name>
<comment type="function">
    <text evidence="2">The physiological role of BioH is to remove the methyl group introduced by BioC when the pimeloyl moiety is complete. It allows to synthesize pimeloyl-ACP via the fatty acid synthetic pathway through the hydrolysis of the ester bonds of pimeloyl-ACP esters.</text>
</comment>
<comment type="catalytic activity">
    <reaction evidence="2">
        <text>6-carboxyhexanoyl-[ACP] methyl ester + H2O = 6-carboxyhexanoyl-[ACP] + methanol + H(+)</text>
        <dbReference type="Rhea" id="RHEA:42700"/>
        <dbReference type="Rhea" id="RHEA-COMP:9955"/>
        <dbReference type="Rhea" id="RHEA-COMP:10186"/>
        <dbReference type="ChEBI" id="CHEBI:15377"/>
        <dbReference type="ChEBI" id="CHEBI:15378"/>
        <dbReference type="ChEBI" id="CHEBI:17790"/>
        <dbReference type="ChEBI" id="CHEBI:78846"/>
        <dbReference type="ChEBI" id="CHEBI:82735"/>
        <dbReference type="EC" id="3.1.1.85"/>
    </reaction>
</comment>
<comment type="pathway">
    <text evidence="2">Cofactor biosynthesis; biotin biosynthesis.</text>
</comment>
<comment type="subunit">
    <text evidence="2">Monomer.</text>
</comment>
<comment type="subcellular location">
    <subcellularLocation>
        <location evidence="2">Cytoplasm</location>
    </subcellularLocation>
</comment>
<comment type="similarity">
    <text evidence="2">Belongs to the AB hydrolase superfamily. Carboxylesterase BioH family.</text>
</comment>
<gene>
    <name evidence="2" type="primary">bioH</name>
    <name type="ordered locus">PMI2924</name>
</gene>